<protein>
    <recommendedName>
        <fullName evidence="4">Nicotinamide/nicotinic acid mononucleotide adenylyltransferase 2</fullName>
        <shortName>NMN/NaMN adenylyltransferase 2</shortName>
        <ecNumber evidence="3">2.7.7.1</ecNumber>
        <ecNumber evidence="3">2.7.7.18</ecNumber>
    </recommendedName>
    <alternativeName>
        <fullName>Nicotinamide mononucleotide adenylyltransferase 2</fullName>
        <shortName>NMN adenylyltransferase 2</shortName>
    </alternativeName>
    <alternativeName>
        <fullName>Nicotinate-nucleotide adenylyltransferase 2</fullName>
        <shortName>NaMN adenylyltransferase 2</shortName>
    </alternativeName>
</protein>
<organism>
    <name type="scientific">Rattus norvegicus</name>
    <name type="common">Rat</name>
    <dbReference type="NCBI Taxonomy" id="10116"/>
    <lineage>
        <taxon>Eukaryota</taxon>
        <taxon>Metazoa</taxon>
        <taxon>Chordata</taxon>
        <taxon>Craniata</taxon>
        <taxon>Vertebrata</taxon>
        <taxon>Euteleostomi</taxon>
        <taxon>Mammalia</taxon>
        <taxon>Eutheria</taxon>
        <taxon>Euarchontoglires</taxon>
        <taxon>Glires</taxon>
        <taxon>Rodentia</taxon>
        <taxon>Myomorpha</taxon>
        <taxon>Muroidea</taxon>
        <taxon>Muridae</taxon>
        <taxon>Murinae</taxon>
        <taxon>Rattus</taxon>
    </lineage>
</organism>
<evidence type="ECO:0000250" key="1">
    <source>
        <dbReference type="UniProtKB" id="Q8BNJ3"/>
    </source>
</evidence>
<evidence type="ECO:0000250" key="2">
    <source>
        <dbReference type="UniProtKB" id="Q96T66"/>
    </source>
</evidence>
<evidence type="ECO:0000250" key="3">
    <source>
        <dbReference type="UniProtKB" id="Q9BZQ4"/>
    </source>
</evidence>
<evidence type="ECO:0000305" key="4"/>
<keyword id="KW-0067">ATP-binding</keyword>
<keyword id="KW-0966">Cell projection</keyword>
<keyword id="KW-0963">Cytoplasm</keyword>
<keyword id="KW-0968">Cytoplasmic vesicle</keyword>
<keyword id="KW-0333">Golgi apparatus</keyword>
<keyword id="KW-0449">Lipoprotein</keyword>
<keyword id="KW-0472">Membrane</keyword>
<keyword id="KW-0520">NAD</keyword>
<keyword id="KW-0547">Nucleotide-binding</keyword>
<keyword id="KW-0548">Nucleotidyltransferase</keyword>
<keyword id="KW-0564">Palmitate</keyword>
<keyword id="KW-0662">Pyridine nucleotide biosynthesis</keyword>
<keyword id="KW-1185">Reference proteome</keyword>
<keyword id="KW-0808">Transferase</keyword>
<keyword id="KW-0832">Ubl conjugation</keyword>
<gene>
    <name type="primary">Nmnat2</name>
</gene>
<accession>Q0HA29</accession>
<reference key="1">
    <citation type="submission" date="2005-04" db="EMBL/GenBank/DDBJ databases">
        <title>Nicotinamide nucleotide adenylyltransferase is neuroprotective against ischemic injury.</title>
        <authorList>
            <person name="Xing J."/>
            <person name="Cao G."/>
            <person name="Zhang L."/>
            <person name="Chen J."/>
        </authorList>
    </citation>
    <scope>NUCLEOTIDE SEQUENCE [MRNA]</scope>
    <source>
        <strain>Sprague-Dawley</strain>
        <tissue>Brain</tissue>
    </source>
</reference>
<dbReference type="EC" id="2.7.7.1" evidence="3"/>
<dbReference type="EC" id="2.7.7.18" evidence="3"/>
<dbReference type="EMBL" id="DQ022370">
    <property type="protein sequence ID" value="AAY87457.1"/>
    <property type="molecule type" value="mRNA"/>
</dbReference>
<dbReference type="RefSeq" id="NP_001041507.1">
    <property type="nucleotide sequence ID" value="NM_001048042.1"/>
</dbReference>
<dbReference type="SMR" id="Q0HA29"/>
<dbReference type="FunCoup" id="Q0HA29">
    <property type="interactions" value="837"/>
</dbReference>
<dbReference type="STRING" id="10116.ENSRNOP00000029020"/>
<dbReference type="PhosphoSitePlus" id="Q0HA29"/>
<dbReference type="SwissPalm" id="Q0HA29"/>
<dbReference type="PaxDb" id="10116-ENSRNOP00000029020"/>
<dbReference type="GeneID" id="289095"/>
<dbReference type="KEGG" id="rno:289095"/>
<dbReference type="UCSC" id="RGD:1307331">
    <property type="organism name" value="rat"/>
</dbReference>
<dbReference type="AGR" id="RGD:1307331"/>
<dbReference type="CTD" id="23057"/>
<dbReference type="RGD" id="1307331">
    <property type="gene designation" value="Nmnat2"/>
</dbReference>
<dbReference type="eggNOG" id="KOG3199">
    <property type="taxonomic scope" value="Eukaryota"/>
</dbReference>
<dbReference type="InParanoid" id="Q0HA29"/>
<dbReference type="OrthoDB" id="8967at9989"/>
<dbReference type="PhylomeDB" id="Q0HA29"/>
<dbReference type="Reactome" id="R-RNO-196807">
    <property type="pathway name" value="Nicotinate metabolism"/>
</dbReference>
<dbReference type="UniPathway" id="UPA00253">
    <property type="reaction ID" value="UER00332"/>
</dbReference>
<dbReference type="UniPathway" id="UPA00253">
    <property type="reaction ID" value="UER00600"/>
</dbReference>
<dbReference type="PRO" id="PR:Q0HA29"/>
<dbReference type="Proteomes" id="UP000002494">
    <property type="component" value="Unplaced"/>
</dbReference>
<dbReference type="GO" id="GO:0030424">
    <property type="term" value="C:axon"/>
    <property type="evidence" value="ECO:0007669"/>
    <property type="project" value="UniProtKB-SubCell"/>
</dbReference>
<dbReference type="GO" id="GO:0030659">
    <property type="term" value="C:cytoplasmic vesicle membrane"/>
    <property type="evidence" value="ECO:0007669"/>
    <property type="project" value="UniProtKB-SubCell"/>
</dbReference>
<dbReference type="GO" id="GO:0005794">
    <property type="term" value="C:Golgi apparatus"/>
    <property type="evidence" value="ECO:0000266"/>
    <property type="project" value="RGD"/>
</dbReference>
<dbReference type="GO" id="GO:0000139">
    <property type="term" value="C:Golgi membrane"/>
    <property type="evidence" value="ECO:0007669"/>
    <property type="project" value="UniProtKB-SubCell"/>
</dbReference>
<dbReference type="GO" id="GO:0005770">
    <property type="term" value="C:late endosome"/>
    <property type="evidence" value="ECO:0000266"/>
    <property type="project" value="RGD"/>
</dbReference>
<dbReference type="GO" id="GO:0045202">
    <property type="term" value="C:synapse"/>
    <property type="evidence" value="ECO:0000266"/>
    <property type="project" value="RGD"/>
</dbReference>
<dbReference type="GO" id="GO:0005802">
    <property type="term" value="C:trans-Golgi network"/>
    <property type="evidence" value="ECO:0000266"/>
    <property type="project" value="RGD"/>
</dbReference>
<dbReference type="GO" id="GO:0005524">
    <property type="term" value="F:ATP binding"/>
    <property type="evidence" value="ECO:0007669"/>
    <property type="project" value="UniProtKB-KW"/>
</dbReference>
<dbReference type="GO" id="GO:0000309">
    <property type="term" value="F:nicotinamide-nucleotide adenylyltransferase activity"/>
    <property type="evidence" value="ECO:0000318"/>
    <property type="project" value="GO_Central"/>
</dbReference>
<dbReference type="GO" id="GO:0004515">
    <property type="term" value="F:nicotinate-nucleotide adenylyltransferase activity"/>
    <property type="evidence" value="ECO:0000266"/>
    <property type="project" value="RGD"/>
</dbReference>
<dbReference type="GO" id="GO:0140768">
    <property type="term" value="F:protein ADP-ribosyltransferase-substrate adaptor activity"/>
    <property type="evidence" value="ECO:0000250"/>
    <property type="project" value="UniProtKB"/>
</dbReference>
<dbReference type="GO" id="GO:1904385">
    <property type="term" value="P:cellular response to angiotensin"/>
    <property type="evidence" value="ECO:0000270"/>
    <property type="project" value="RGD"/>
</dbReference>
<dbReference type="GO" id="GO:0009435">
    <property type="term" value="P:NAD biosynthetic process"/>
    <property type="evidence" value="ECO:0000315"/>
    <property type="project" value="RGD"/>
</dbReference>
<dbReference type="GO" id="GO:2000766">
    <property type="term" value="P:negative regulation of cytoplasmic translation"/>
    <property type="evidence" value="ECO:0000266"/>
    <property type="project" value="RGD"/>
</dbReference>
<dbReference type="CDD" id="cd09286">
    <property type="entry name" value="NMNAT_Eukarya"/>
    <property type="match status" value="1"/>
</dbReference>
<dbReference type="FunFam" id="3.40.50.620:FF:000080">
    <property type="entry name" value="Nicotinamide/nicotinic acid mononucleotide adenylyltransferase 2"/>
    <property type="match status" value="2"/>
</dbReference>
<dbReference type="Gene3D" id="3.40.50.620">
    <property type="entry name" value="HUPs"/>
    <property type="match status" value="1"/>
</dbReference>
<dbReference type="InterPro" id="IPR004821">
    <property type="entry name" value="Cyt_trans-like"/>
</dbReference>
<dbReference type="InterPro" id="IPR051182">
    <property type="entry name" value="Euk_NMN_adenylyltrnsfrase"/>
</dbReference>
<dbReference type="InterPro" id="IPR045094">
    <property type="entry name" value="NMNAT_euk"/>
</dbReference>
<dbReference type="InterPro" id="IPR014729">
    <property type="entry name" value="Rossmann-like_a/b/a_fold"/>
</dbReference>
<dbReference type="PANTHER" id="PTHR12039">
    <property type="entry name" value="NICOTINAMIDE MONONUCLEOTIDE ADENYLYLTRANSFERASE"/>
    <property type="match status" value="1"/>
</dbReference>
<dbReference type="PANTHER" id="PTHR12039:SF18">
    <property type="entry name" value="NICOTINAMIDE_NICOTINIC ACID MONONUCLEOTIDE ADENYLYLTRANSFERASE 2"/>
    <property type="match status" value="1"/>
</dbReference>
<dbReference type="Pfam" id="PF01467">
    <property type="entry name" value="CTP_transf_like"/>
    <property type="match status" value="1"/>
</dbReference>
<dbReference type="SUPFAM" id="SSF52374">
    <property type="entry name" value="Nucleotidylyl transferase"/>
    <property type="match status" value="1"/>
</dbReference>
<feature type="chain" id="PRO_0000328662" description="Nicotinamide/nicotinic acid mononucleotide adenylyltransferase 2">
    <location>
        <begin position="1"/>
        <end position="307"/>
    </location>
</feature>
<feature type="binding site" evidence="2">
    <location>
        <position position="16"/>
    </location>
    <ligand>
        <name>NAD(+)</name>
        <dbReference type="ChEBI" id="CHEBI:57540"/>
    </ligand>
</feature>
<feature type="binding site" evidence="2">
    <location>
        <position position="17"/>
    </location>
    <ligand>
        <name>NAD(+)</name>
        <dbReference type="ChEBI" id="CHEBI:57540"/>
    </ligand>
</feature>
<feature type="binding site" description="in other chain" evidence="2">
    <location>
        <position position="24"/>
    </location>
    <ligand>
        <name>ATP</name>
        <dbReference type="ChEBI" id="CHEBI:30616"/>
        <note>ligand shared between dimeric partners</note>
    </ligand>
</feature>
<feature type="binding site" evidence="2">
    <location>
        <position position="92"/>
    </location>
    <ligand>
        <name>NAD(+)</name>
        <dbReference type="ChEBI" id="CHEBI:57540"/>
    </ligand>
</feature>
<feature type="binding site" evidence="2">
    <location>
        <position position="95"/>
    </location>
    <ligand>
        <name>NAD(+)</name>
        <dbReference type="ChEBI" id="CHEBI:57540"/>
    </ligand>
</feature>
<feature type="binding site" evidence="2">
    <location>
        <position position="200"/>
    </location>
    <ligand>
        <name>NAD(+)</name>
        <dbReference type="ChEBI" id="CHEBI:57540"/>
    </ligand>
</feature>
<feature type="binding site" evidence="2">
    <location>
        <position position="202"/>
    </location>
    <ligand>
        <name>NAD(+)</name>
        <dbReference type="ChEBI" id="CHEBI:57540"/>
    </ligand>
</feature>
<feature type="binding site" evidence="2">
    <location>
        <position position="212"/>
    </location>
    <ligand>
        <name>NAD(+)</name>
        <dbReference type="ChEBI" id="CHEBI:57540"/>
    </ligand>
</feature>
<feature type="binding site" evidence="2">
    <location>
        <position position="213"/>
    </location>
    <ligand>
        <name>NAD(+)</name>
        <dbReference type="ChEBI" id="CHEBI:57540"/>
    </ligand>
</feature>
<feature type="binding site" evidence="2">
    <location>
        <position position="232"/>
    </location>
    <ligand>
        <name>NAD(+)</name>
        <dbReference type="ChEBI" id="CHEBI:57540"/>
    </ligand>
</feature>
<feature type="binding site" description="in other chain" evidence="2">
    <location>
        <begin position="271"/>
        <end position="274"/>
    </location>
    <ligand>
        <name>ATP</name>
        <dbReference type="ChEBI" id="CHEBI:30616"/>
        <note>ligand shared between dimeric partners</note>
    </ligand>
</feature>
<feature type="lipid moiety-binding region" description="S-palmitoyl cysteine" evidence="1">
    <location>
        <position position="164"/>
    </location>
</feature>
<feature type="lipid moiety-binding region" description="S-palmitoyl cysteine" evidence="1">
    <location>
        <position position="165"/>
    </location>
</feature>
<proteinExistence type="evidence at transcript level"/>
<sequence length="307" mass="34445">MTETTKTHVILLACGSFNPITKGHIQMFERARDYLHKTGRFIVIGGIVSPVHDSYGKQGLVSSRHRLIMCQLAVQNSDWIRVDPWECYQDTWQTTCSVLEHHRDLMKRVTGCILSNVNTPSMTPVIGQPQHENTQPIYQNSNVPTKPTAAKILGKVGESLGRICCVRPPVERFTFVDENANLGTVMRYEEIELRILLLCGSDLLESFCIPGLWNEADMEVIVGDFGIVVVPRDAADADRIMNHSSILRKYKNNIMVVKDDINHPMSVVSSTKSRLALQHGDGHVVDYLSQPVIDYILKSQLYINASG</sequence>
<comment type="function">
    <text evidence="1 3">Nicotinamide/nicotinate-nucleotide adenylyltransferase that acts as an axon maintenance factor (By similarity). Axon survival factor required for the maintenance of healthy axons: acts by delaying Wallerian axon degeneration, an evolutionarily conserved process that drives the loss of damaged axons (By similarity). Catalyzes the formation of NAD(+) from nicotinamide mononucleotide (NMN) and ATP. Can also use the deamidated form; nicotinic acid mononucleotide (NaMN) as substrate but with a lower efficiency. Cannot use triazofurin monophosphate (TrMP) as substrate. Also catalyzes the reverse reaction, i.e. the pyrophosphorolytic cleavage of NAD(+). For the pyrophosphorolytic activity prefers NAD(+), NADH and NaAD as substrates and degrades nicotinic acid adenine dinucleotide phosphate (NHD) less effectively. Fails to cleave phosphorylated dinucleotides NADP(+), NADPH and NaADP(+). Also acts as an activator of ADP-ribosylation by supporting the catalytic activity of PARP16 and promoting mono-ADP-ribosylation of ribosomes by PARP16 (By similarity). May be involved in the maintenance of axonal integrity (By similarity).</text>
</comment>
<comment type="catalytic activity">
    <reaction evidence="3">
        <text>beta-nicotinamide D-ribonucleotide + ATP + H(+) = diphosphate + NAD(+)</text>
        <dbReference type="Rhea" id="RHEA:21360"/>
        <dbReference type="ChEBI" id="CHEBI:14649"/>
        <dbReference type="ChEBI" id="CHEBI:15378"/>
        <dbReference type="ChEBI" id="CHEBI:30616"/>
        <dbReference type="ChEBI" id="CHEBI:33019"/>
        <dbReference type="ChEBI" id="CHEBI:57540"/>
        <dbReference type="EC" id="2.7.7.1"/>
    </reaction>
    <physiologicalReaction direction="left-to-right" evidence="3">
        <dbReference type="Rhea" id="RHEA:21361"/>
    </physiologicalReaction>
    <physiologicalReaction direction="right-to-left" evidence="3">
        <dbReference type="Rhea" id="RHEA:21362"/>
    </physiologicalReaction>
</comment>
<comment type="catalytic activity">
    <reaction evidence="3">
        <text>nicotinate beta-D-ribonucleotide + ATP + H(+) = deamido-NAD(+) + diphosphate</text>
        <dbReference type="Rhea" id="RHEA:22860"/>
        <dbReference type="ChEBI" id="CHEBI:15378"/>
        <dbReference type="ChEBI" id="CHEBI:30616"/>
        <dbReference type="ChEBI" id="CHEBI:33019"/>
        <dbReference type="ChEBI" id="CHEBI:57502"/>
        <dbReference type="ChEBI" id="CHEBI:58437"/>
        <dbReference type="EC" id="2.7.7.18"/>
    </reaction>
    <physiologicalReaction direction="left-to-right" evidence="3">
        <dbReference type="Rhea" id="RHEA:22861"/>
    </physiologicalReaction>
    <physiologicalReaction direction="right-to-left" evidence="3">
        <dbReference type="Rhea" id="RHEA:22862"/>
    </physiologicalReaction>
</comment>
<comment type="cofactor">
    <cofactor evidence="3">
        <name>Mg(2+)</name>
        <dbReference type="ChEBI" id="CHEBI:18420"/>
    </cofactor>
    <text evidence="3">Divalent metal cations. Mg(2+) confers the highest activity.</text>
</comment>
<comment type="activity regulation">
    <text evidence="3">Inhibited by P1-(adenosine-5')-P3-(nicotinamide-riboside-5')-triphosphate (Np3AD) and P1-(adenosine-5')-P4-(nicotinamide-riboside-5')-tetraphosphate (Np4AD).</text>
</comment>
<comment type="pathway">
    <text evidence="3">Cofactor biosynthesis; NAD(+) biosynthesis; NAD(+) from nicotinamide D-ribonucleotide: step 1/1.</text>
</comment>
<comment type="pathway">
    <text evidence="3">Cofactor biosynthesis; NAD(+) biosynthesis; deamido-NAD(+) from nicotinate D-ribonucleotide: step 1/1.</text>
</comment>
<comment type="subunit">
    <text evidence="3">Monomer.</text>
</comment>
<comment type="subcellular location">
    <subcellularLocation>
        <location evidence="1">Golgi apparatus membrane</location>
        <topology evidence="1">Lipid-anchor</topology>
    </subcellularLocation>
    <subcellularLocation>
        <location evidence="1">Cytoplasmic vesicle membrane</location>
        <topology evidence="1">Lipid-anchor</topology>
    </subcellularLocation>
    <subcellularLocation>
        <location evidence="3">Cytoplasm</location>
    </subcellularLocation>
    <subcellularLocation>
        <location evidence="1">Cell projection</location>
        <location evidence="1">Axon</location>
    </subcellularLocation>
    <text evidence="1">Delivered to axons with Golgi-derived cytoplasmic vesicles.</text>
</comment>
<comment type="PTM">
    <text evidence="1 3">Degraded in response to injured neurite (By similarity). Degradation is caused by polyubiquitination by MYCBP2 after recognition by FBXO45 (By similarity).</text>
</comment>
<comment type="PTM">
    <text evidence="1">Palmitoylated; palmitoylation is required for membrane association.</text>
</comment>
<comment type="similarity">
    <text evidence="4">Belongs to the eukaryotic NMN adenylyltransferase family.</text>
</comment>
<name>NMNA2_RAT</name>